<feature type="chain" id="PRO_0000296973" description="UPF0342 protein DSY1594">
    <location>
        <begin position="1"/>
        <end position="131"/>
    </location>
</feature>
<organism>
    <name type="scientific">Desulfitobacterium hafniense (strain Y51)</name>
    <dbReference type="NCBI Taxonomy" id="138119"/>
    <lineage>
        <taxon>Bacteria</taxon>
        <taxon>Bacillati</taxon>
        <taxon>Bacillota</taxon>
        <taxon>Clostridia</taxon>
        <taxon>Eubacteriales</taxon>
        <taxon>Desulfitobacteriaceae</taxon>
        <taxon>Desulfitobacterium</taxon>
    </lineage>
</organism>
<comment type="similarity">
    <text evidence="1">Belongs to the UPF0342 family.</text>
</comment>
<comment type="sequence caution" evidence="2">
    <conflict type="erroneous initiation">
        <sequence resource="EMBL-CDS" id="BAE83383"/>
    </conflict>
</comment>
<sequence>MTAEIMEKAEVLAAAIAKSVELQNLRSTEEAMMADEQAQQIIADFQNEQQRVYELQAQGQELTDEVQQAIDAMEAKVEGYPPIAAYLQAQEQFTKMLDTINGVLAQAIANDPNGGGCSCDTGCSGCGGSCS</sequence>
<accession>Q24X59</accession>
<proteinExistence type="inferred from homology"/>
<evidence type="ECO:0000255" key="1">
    <source>
        <dbReference type="HAMAP-Rule" id="MF_01526"/>
    </source>
</evidence>
<evidence type="ECO:0000305" key="2"/>
<protein>
    <recommendedName>
        <fullName evidence="1">UPF0342 protein DSY1594</fullName>
    </recommendedName>
</protein>
<keyword id="KW-1185">Reference proteome</keyword>
<dbReference type="EMBL" id="AP008230">
    <property type="protein sequence ID" value="BAE83383.1"/>
    <property type="status" value="ALT_INIT"/>
    <property type="molecule type" value="Genomic_DNA"/>
</dbReference>
<dbReference type="RefSeq" id="WP_015944200.1">
    <property type="nucleotide sequence ID" value="NC_007907.1"/>
</dbReference>
<dbReference type="SMR" id="Q24X59"/>
<dbReference type="STRING" id="138119.DSY1594"/>
<dbReference type="KEGG" id="dsy:DSY1594"/>
<dbReference type="eggNOG" id="COG3679">
    <property type="taxonomic scope" value="Bacteria"/>
</dbReference>
<dbReference type="HOGENOM" id="CLU_140243_1_0_9"/>
<dbReference type="Proteomes" id="UP000001946">
    <property type="component" value="Chromosome"/>
</dbReference>
<dbReference type="Gene3D" id="1.20.1500.10">
    <property type="entry name" value="YheA/YmcA-like"/>
    <property type="match status" value="1"/>
</dbReference>
<dbReference type="HAMAP" id="MF_01526">
    <property type="entry name" value="UPF0342"/>
    <property type="match status" value="1"/>
</dbReference>
<dbReference type="InterPro" id="IPR052767">
    <property type="entry name" value="Bact_com_dev_regulator"/>
</dbReference>
<dbReference type="InterPro" id="IPR010368">
    <property type="entry name" value="Com_YlbF"/>
</dbReference>
<dbReference type="InterPro" id="IPR023378">
    <property type="entry name" value="YheA/YmcA-like_dom_sf"/>
</dbReference>
<dbReference type="PANTHER" id="PTHR38448">
    <property type="entry name" value="REGULATORY PROTEIN YLBF-RELATED"/>
    <property type="match status" value="1"/>
</dbReference>
<dbReference type="PANTHER" id="PTHR38448:SF1">
    <property type="entry name" value="YLBF FAMILY REGULATOR"/>
    <property type="match status" value="1"/>
</dbReference>
<dbReference type="Pfam" id="PF06133">
    <property type="entry name" value="Com_YlbF"/>
    <property type="match status" value="1"/>
</dbReference>
<dbReference type="SUPFAM" id="SSF158622">
    <property type="entry name" value="YheA/YmcA-like"/>
    <property type="match status" value="1"/>
</dbReference>
<reference key="1">
    <citation type="journal article" date="2006" name="J. Bacteriol.">
        <title>Complete genome sequence of the dehalorespiring bacterium Desulfitobacterium hafniense Y51 and comparison with Dehalococcoides ethenogenes 195.</title>
        <authorList>
            <person name="Nonaka H."/>
            <person name="Keresztes G."/>
            <person name="Shinoda Y."/>
            <person name="Ikenaga Y."/>
            <person name="Abe M."/>
            <person name="Naito K."/>
            <person name="Inatomi K."/>
            <person name="Furukawa K."/>
            <person name="Inui M."/>
            <person name="Yukawa H."/>
        </authorList>
    </citation>
    <scope>NUCLEOTIDE SEQUENCE [LARGE SCALE GENOMIC DNA]</scope>
    <source>
        <strain>Y51</strain>
    </source>
</reference>
<gene>
    <name type="ordered locus">DSY1594</name>
</gene>
<name>Y1594_DESHY</name>